<organism>
    <name type="scientific">Mycobacterium tuberculosis (strain ATCC 25618 / H37Rv)</name>
    <dbReference type="NCBI Taxonomy" id="83332"/>
    <lineage>
        <taxon>Bacteria</taxon>
        <taxon>Bacillati</taxon>
        <taxon>Actinomycetota</taxon>
        <taxon>Actinomycetes</taxon>
        <taxon>Mycobacteriales</taxon>
        <taxon>Mycobacteriaceae</taxon>
        <taxon>Mycobacterium</taxon>
        <taxon>Mycobacterium tuberculosis complex</taxon>
    </lineage>
</organism>
<keyword id="KW-1003">Cell membrane</keyword>
<keyword id="KW-0325">Glycoprotein</keyword>
<keyword id="KW-0445">Lipid transport</keyword>
<keyword id="KW-0446">Lipid-binding</keyword>
<keyword id="KW-0449">Lipoprotein</keyword>
<keyword id="KW-0472">Membrane</keyword>
<keyword id="KW-0564">Palmitate</keyword>
<keyword id="KW-1185">Reference proteome</keyword>
<keyword id="KW-0732">Signal</keyword>
<keyword id="KW-0813">Transport</keyword>
<gene>
    <name type="primary">lprF</name>
    <name type="ordered locus">Rv1368</name>
    <name type="ORF">MTCY02B12.02</name>
</gene>
<dbReference type="EMBL" id="AL123456">
    <property type="protein sequence ID" value="CCP44127.1"/>
    <property type="molecule type" value="Genomic_DNA"/>
</dbReference>
<dbReference type="PIR" id="E70957">
    <property type="entry name" value="E70957"/>
</dbReference>
<dbReference type="RefSeq" id="NP_215884.1">
    <property type="nucleotide sequence ID" value="NC_000962.3"/>
</dbReference>
<dbReference type="RefSeq" id="WP_003407180.1">
    <property type="nucleotide sequence ID" value="NZ_NVQJ01000031.1"/>
</dbReference>
<dbReference type="SMR" id="P9WK47"/>
<dbReference type="STRING" id="83332.Rv1368"/>
<dbReference type="PaxDb" id="83332-Rv1368"/>
<dbReference type="DNASU" id="886798"/>
<dbReference type="GeneID" id="886798"/>
<dbReference type="KEGG" id="mtu:Rv1368"/>
<dbReference type="KEGG" id="mtv:RVBD_1368"/>
<dbReference type="TubercuList" id="Rv1368"/>
<dbReference type="eggNOG" id="ENOG50338Y0">
    <property type="taxonomic scope" value="Bacteria"/>
</dbReference>
<dbReference type="InParanoid" id="P9WK47"/>
<dbReference type="OrthoDB" id="4763237at2"/>
<dbReference type="PhylomeDB" id="P9WK47"/>
<dbReference type="Proteomes" id="UP000001584">
    <property type="component" value="Chromosome"/>
</dbReference>
<dbReference type="GO" id="GO:0005576">
    <property type="term" value="C:extracellular region"/>
    <property type="evidence" value="ECO:0007005"/>
    <property type="project" value="MTBBASE"/>
</dbReference>
<dbReference type="GO" id="GO:0009274">
    <property type="term" value="C:peptidoglycan-based cell wall"/>
    <property type="evidence" value="ECO:0007005"/>
    <property type="project" value="MTBBASE"/>
</dbReference>
<dbReference type="GO" id="GO:0005886">
    <property type="term" value="C:plasma membrane"/>
    <property type="evidence" value="ECO:0000314"/>
    <property type="project" value="MTBBASE"/>
</dbReference>
<dbReference type="GO" id="GO:0008289">
    <property type="term" value="F:lipid binding"/>
    <property type="evidence" value="ECO:0007669"/>
    <property type="project" value="UniProtKB-KW"/>
</dbReference>
<dbReference type="GO" id="GO:0006869">
    <property type="term" value="P:lipid transport"/>
    <property type="evidence" value="ECO:0007669"/>
    <property type="project" value="UniProtKB-KW"/>
</dbReference>
<dbReference type="CDD" id="cd16334">
    <property type="entry name" value="LppX-like"/>
    <property type="match status" value="1"/>
</dbReference>
<dbReference type="Gene3D" id="2.50.20.20">
    <property type="match status" value="1"/>
</dbReference>
<dbReference type="InterPro" id="IPR029046">
    <property type="entry name" value="LolA/LolB/LppX"/>
</dbReference>
<dbReference type="InterPro" id="IPR009830">
    <property type="entry name" value="LppX/LprAFG"/>
</dbReference>
<dbReference type="Pfam" id="PF07161">
    <property type="entry name" value="LppX_LprAFG"/>
    <property type="match status" value="1"/>
</dbReference>
<dbReference type="SUPFAM" id="SSF89392">
    <property type="entry name" value="Prokaryotic lipoproteins and lipoprotein localization factors"/>
    <property type="match status" value="1"/>
</dbReference>
<evidence type="ECO:0000250" key="1">
    <source>
        <dbReference type="UniProtKB" id="P65315"/>
    </source>
</evidence>
<evidence type="ECO:0000255" key="2"/>
<evidence type="ECO:0000256" key="3">
    <source>
        <dbReference type="SAM" id="MobiDB-lite"/>
    </source>
</evidence>
<evidence type="ECO:0000269" key="4">
    <source>
    </source>
</evidence>
<evidence type="ECO:0000269" key="5">
    <source>
    </source>
</evidence>
<evidence type="ECO:0000269" key="6">
    <source>
    </source>
</evidence>
<evidence type="ECO:0000305" key="7"/>
<evidence type="ECO:0000305" key="8">
    <source>
    </source>
</evidence>
<evidence type="ECO:0000305" key="9">
    <source>
    </source>
</evidence>
<feature type="signal peptide" evidence="2 9">
    <location>
        <begin position="1"/>
        <end position="38"/>
    </location>
</feature>
<feature type="chain" id="PRO_0000018143" description="Putative diacylated glycolipid transporter LprF">
    <location>
        <begin position="39"/>
        <end position="261"/>
    </location>
</feature>
<feature type="region of interest" description="Disordered" evidence="3">
    <location>
        <begin position="42"/>
        <end position="61"/>
    </location>
</feature>
<feature type="lipid moiety-binding region" description="N-palmitoyl cysteine" evidence="5 6">
    <location>
        <position position="39"/>
    </location>
</feature>
<feature type="lipid moiety-binding region" description="S-diacylglycerol cysteine" evidence="5 6">
    <location>
        <position position="39"/>
    </location>
</feature>
<feature type="mutagenesis site" description="No longer increases KdpD induction at 0 and 250 uM K(+); when associated with S-185 and V-197." evidence="4">
    <original>M</original>
    <variation>T</variation>
    <location>
        <position position="132"/>
    </location>
</feature>
<feature type="mutagenesis site" description="No longer increases KdpD induction at 0 and 250 uM K(+); when associated with T-132 and V-197." evidence="4">
    <original>T</original>
    <variation>S</variation>
    <location>
        <position position="185"/>
    </location>
</feature>
<feature type="mutagenesis site" description="No longer increases KdpD induction at 0 and 250 uM K(+); when associated with T-132 and S-185." evidence="4">
    <original>I</original>
    <variation>V</variation>
    <location>
        <position position="197"/>
    </location>
</feature>
<comment type="function">
    <text evidence="1 4">Might be involved in transporting short diacylated glycolipids to the cell outer membrane (By similarity). Overexpression induces expression of sensor protein kdpD gene at low K(+) concentrations (0 and 250 uM, tested in M.smegatis).</text>
</comment>
<comment type="subunit">
    <text evidence="8">May interact with sensor protein KdpD.</text>
</comment>
<comment type="subcellular location">
    <subcellularLocation>
        <location evidence="8">Cell membrane</location>
        <topology evidence="7">Lipid-anchor</topology>
        <orientation evidence="8">Extracellular side</orientation>
    </subcellularLocation>
</comment>
<comment type="domain">
    <text evidence="1">Forms a U-shaped beta-half-barrel with a small hydrophobic cavity which is large enough to hold a single diacylated glycolipid molecule.</text>
</comment>
<comment type="PTM">
    <text evidence="5 6">Modified by Lgt on Cys-39 with an S-linked diacylglycerol with a mixture of C16, C18 and C19 fatty acids (palmitic, stearic and tuberculostearic acid respectively), signal peptide is removed by LspA, modified by Lnt with an amide-linked mixture of C16 and C19 fatty acids, expressed in M.bovis (PubMed:24093492). Hexose glycosylated in N-terminus between residues 39 and 63 (PubMed:24093492).</text>
</comment>
<comment type="mass spectrometry">
    <text>Expressed in M.bovis, lipidated and glycosylated.</text>
</comment>
<comment type="similarity">
    <text evidence="7">Belongs to the LppX/LprAFG lipoprotein family.</text>
</comment>
<reference key="1">
    <citation type="journal article" date="1998" name="Nature">
        <title>Deciphering the biology of Mycobacterium tuberculosis from the complete genome sequence.</title>
        <authorList>
            <person name="Cole S.T."/>
            <person name="Brosch R."/>
            <person name="Parkhill J."/>
            <person name="Garnier T."/>
            <person name="Churcher C.M."/>
            <person name="Harris D.E."/>
            <person name="Gordon S.V."/>
            <person name="Eiglmeier K."/>
            <person name="Gas S."/>
            <person name="Barry C.E. III"/>
            <person name="Tekaia F."/>
            <person name="Badcock K."/>
            <person name="Basham D."/>
            <person name="Brown D."/>
            <person name="Chillingworth T."/>
            <person name="Connor R."/>
            <person name="Davies R.M."/>
            <person name="Devlin K."/>
            <person name="Feltwell T."/>
            <person name="Gentles S."/>
            <person name="Hamlin N."/>
            <person name="Holroyd S."/>
            <person name="Hornsby T."/>
            <person name="Jagels K."/>
            <person name="Krogh A."/>
            <person name="McLean J."/>
            <person name="Moule S."/>
            <person name="Murphy L.D."/>
            <person name="Oliver S."/>
            <person name="Osborne J."/>
            <person name="Quail M.A."/>
            <person name="Rajandream M.A."/>
            <person name="Rogers J."/>
            <person name="Rutter S."/>
            <person name="Seeger K."/>
            <person name="Skelton S."/>
            <person name="Squares S."/>
            <person name="Squares R."/>
            <person name="Sulston J.E."/>
            <person name="Taylor K."/>
            <person name="Whitehead S."/>
            <person name="Barrell B.G."/>
        </authorList>
    </citation>
    <scope>NUCLEOTIDE SEQUENCE [LARGE SCALE GENOMIC DNA]</scope>
    <source>
        <strain>ATCC 25618 / H37Rv</strain>
    </source>
</reference>
<reference key="2">
    <citation type="journal article" date="2003" name="Mol. Microbiol.">
        <title>Interaction of the sensor module of Mycobacterium tuberculosis H37Rv KdpD with members of the Lpr family.</title>
        <authorList>
            <person name="Steyn A.J."/>
            <person name="Joseph J."/>
            <person name="Bloom B.R."/>
        </authorList>
    </citation>
    <scope>FUNCTION</scope>
    <scope>POSSIBLE INTERACTION WITH KDPD</scope>
    <scope>SUBCELLULAR LOCATION</scope>
    <scope>TOPOLOGY</scope>
    <scope>MUTAGENESIS OF MET-132; THR-185 AND ILE-197</scope>
    <source>
        <strain>ATCC 25618 / H37Rv</strain>
    </source>
</reference>
<reference key="3">
    <citation type="journal article" date="2010" name="Biochem. Biophys. Res. Commun.">
        <title>Cloning, expression and characterization of Mycobacterium tuberculosis lipoprotein LprF.</title>
        <authorList>
            <person name="Bruelle J.K."/>
            <person name="Grau T."/>
            <person name="Tschumi A."/>
            <person name="Auchli Y."/>
            <person name="Burri R."/>
            <person name="Polsfuss S."/>
            <person name="Keller P.M."/>
            <person name="Hunziker P."/>
            <person name="Sander P."/>
        </authorList>
    </citation>
    <scope>DIACYLGLYCEROL AT CYS-39</scope>
    <scope>PALMITOYLATION AT CYS-39</scope>
    <scope>LIPIDATION</scope>
    <scope>GLYCOSYLATION</scope>
    <scope>EXPRESSION IN M.SMEGMATIS</scope>
</reference>
<reference key="4">
    <citation type="journal article" date="2011" name="Mol. Cell. Proteomics">
        <title>Proteogenomic analysis of Mycobacterium tuberculosis by high resolution mass spectrometry.</title>
        <authorList>
            <person name="Kelkar D.S."/>
            <person name="Kumar D."/>
            <person name="Kumar P."/>
            <person name="Balakrishnan L."/>
            <person name="Muthusamy B."/>
            <person name="Yadav A.K."/>
            <person name="Shrivastava P."/>
            <person name="Marimuthu A."/>
            <person name="Anand S."/>
            <person name="Sundaram H."/>
            <person name="Kingsbury R."/>
            <person name="Harsha H.C."/>
            <person name="Nair B."/>
            <person name="Prasad T.S."/>
            <person name="Chauhan D.S."/>
            <person name="Katoch K."/>
            <person name="Katoch V.M."/>
            <person name="Kumar P."/>
            <person name="Chaerkady R."/>
            <person name="Ramachandran S."/>
            <person name="Dash D."/>
            <person name="Pandey A."/>
        </authorList>
    </citation>
    <scope>IDENTIFICATION BY MASS SPECTROMETRY [LARGE SCALE ANALYSIS]</scope>
    <source>
        <strain>ATCC 25618 / H37Rv</strain>
    </source>
</reference>
<reference key="5">
    <citation type="journal article" date="2013" name="BMC Microbiol.">
        <title>Lipoproteins of slow-growing Mycobacteria carry three fatty acids and are N-acylated by apolipoprotein N-acyltransferase BCG_2070c.</title>
        <authorList>
            <person name="Bruelle J.K."/>
            <person name="Tschumi A."/>
            <person name="Sander P."/>
        </authorList>
    </citation>
    <scope>MASS SPECTROMETRY</scope>
    <scope>DIACYLGLYCEROL AT CYS-39</scope>
    <scope>PALMITOYLATION AT CYS-39</scope>
    <scope>LIPIDATION</scope>
    <scope>GLYCOSYLATION</scope>
    <scope>EXPRESSION IN M.BOVIS</scope>
    <source>
        <strain>H37Rv</strain>
    </source>
</reference>
<proteinExistence type="evidence at protein level"/>
<accession>P9WK47</accession>
<accession>L0T6N3</accession>
<accession>P65314</accession>
<accession>P71798</accession>
<name>LPRF_MYCTU</name>
<protein>
    <recommendedName>
        <fullName>Putative diacylated glycolipid transporter LprF</fullName>
    </recommendedName>
    <alternativeName>
        <fullName>Lipoprotein LprF</fullName>
    </alternativeName>
</protein>
<sequence>MNGLISQACGSHRPRRPSSLGAVAILIAATLFATVVAGCGKKPTTASSPSPGSPSPEAQQILQDSSKATKGLHSVHVVVTVNNLSTLPFESVDADVTNQPQGNGQAVGNAKVRMKPNTPVVATEFLVTNKTMYTKRGGDYVSVGPAEKIYDPGIILDKDRGLGAVVGQVQNPTIQGRDAIDGLATVKVSGTIDAAVIDPIVPQLGKGGGRLPITLWIVDTNASTPAPAANLVRMVIDKDQGNVDITLSNWGAPVTIPNPAG</sequence>